<protein>
    <recommendedName>
        <fullName>Lysozyme C</fullName>
        <ecNumber>3.2.1.17</ecNumber>
    </recommendedName>
    <alternativeName>
        <fullName>1,4-beta-N-acetylmuramidase C</fullName>
    </alternativeName>
</protein>
<reference key="1">
    <citation type="journal article" date="1997" name="Nature">
        <title>Episodic adaptive evolution of primate lysozymes.</title>
        <authorList>
            <person name="Messier W."/>
            <person name="Stewart C.B."/>
        </authorList>
    </citation>
    <scope>NUCLEOTIDE SEQUENCE [GENOMIC DNA]</scope>
    <source>
        <tissue>Blood</tissue>
    </source>
</reference>
<dbReference type="EC" id="3.2.1.17"/>
<dbReference type="EMBL" id="U76933">
    <property type="protein sequence ID" value="AAB41214.1"/>
    <property type="molecule type" value="Genomic_DNA"/>
</dbReference>
<dbReference type="EMBL" id="U76930">
    <property type="protein sequence ID" value="AAB41214.1"/>
    <property type="status" value="JOINED"/>
    <property type="molecule type" value="Genomic_DNA"/>
</dbReference>
<dbReference type="EMBL" id="U76931">
    <property type="protein sequence ID" value="AAB41214.1"/>
    <property type="status" value="JOINED"/>
    <property type="molecule type" value="Genomic_DNA"/>
</dbReference>
<dbReference type="EMBL" id="U76932">
    <property type="protein sequence ID" value="AAB41214.1"/>
    <property type="status" value="JOINED"/>
    <property type="molecule type" value="Genomic_DNA"/>
</dbReference>
<dbReference type="RefSeq" id="XP_003808770.1">
    <property type="nucleotide sequence ID" value="XM_003808722.6"/>
</dbReference>
<dbReference type="BMRB" id="P61627"/>
<dbReference type="SMR" id="P61627"/>
<dbReference type="STRING" id="9597.ENSPPAP00000032089"/>
<dbReference type="CAZy" id="GH22">
    <property type="family name" value="Glycoside Hydrolase Family 22"/>
</dbReference>
<dbReference type="Ensembl" id="ENSPPAT00000054955.1">
    <property type="protein sequence ID" value="ENSPPAP00000032089.1"/>
    <property type="gene ID" value="ENSPPAG00000038937.1"/>
</dbReference>
<dbReference type="GeneID" id="100970943"/>
<dbReference type="KEGG" id="pps:100970943"/>
<dbReference type="CTD" id="4069"/>
<dbReference type="eggNOG" id="ENOG502S1S1">
    <property type="taxonomic scope" value="Eukaryota"/>
</dbReference>
<dbReference type="GeneTree" id="ENSGT00940000153832"/>
<dbReference type="OMA" id="VYERCEF"/>
<dbReference type="OrthoDB" id="742at9604"/>
<dbReference type="Proteomes" id="UP000240080">
    <property type="component" value="Chromosome 12"/>
</dbReference>
<dbReference type="Bgee" id="ENSPPAG00000038937">
    <property type="expression patterns" value="Expressed in liver and 6 other cell types or tissues"/>
</dbReference>
<dbReference type="GO" id="GO:0005615">
    <property type="term" value="C:extracellular space"/>
    <property type="evidence" value="ECO:0007669"/>
    <property type="project" value="Ensembl"/>
</dbReference>
<dbReference type="GO" id="GO:0042802">
    <property type="term" value="F:identical protein binding"/>
    <property type="evidence" value="ECO:0007669"/>
    <property type="project" value="Ensembl"/>
</dbReference>
<dbReference type="GO" id="GO:0003796">
    <property type="term" value="F:lysozyme activity"/>
    <property type="evidence" value="ECO:0007669"/>
    <property type="project" value="UniProtKB-EC"/>
</dbReference>
<dbReference type="GO" id="GO:0050829">
    <property type="term" value="P:defense response to Gram-negative bacterium"/>
    <property type="evidence" value="ECO:0007669"/>
    <property type="project" value="TreeGrafter"/>
</dbReference>
<dbReference type="GO" id="GO:0050830">
    <property type="term" value="P:defense response to Gram-positive bacterium"/>
    <property type="evidence" value="ECO:0007669"/>
    <property type="project" value="Ensembl"/>
</dbReference>
<dbReference type="GO" id="GO:0031640">
    <property type="term" value="P:killing of cells of another organism"/>
    <property type="evidence" value="ECO:0007669"/>
    <property type="project" value="UniProtKB-KW"/>
</dbReference>
<dbReference type="CDD" id="cd16897">
    <property type="entry name" value="LYZ_C"/>
    <property type="match status" value="1"/>
</dbReference>
<dbReference type="FunFam" id="1.10.530.10:FF:000001">
    <property type="entry name" value="Lysozyme C"/>
    <property type="match status" value="1"/>
</dbReference>
<dbReference type="Gene3D" id="1.10.530.10">
    <property type="match status" value="1"/>
</dbReference>
<dbReference type="InterPro" id="IPR001916">
    <property type="entry name" value="Glyco_hydro_22"/>
</dbReference>
<dbReference type="InterPro" id="IPR019799">
    <property type="entry name" value="Glyco_hydro_22_CS"/>
</dbReference>
<dbReference type="InterPro" id="IPR000974">
    <property type="entry name" value="Glyco_hydro_22_lys"/>
</dbReference>
<dbReference type="InterPro" id="IPR023346">
    <property type="entry name" value="Lysozyme-like_dom_sf"/>
</dbReference>
<dbReference type="PANTHER" id="PTHR11407">
    <property type="entry name" value="LYSOZYME C"/>
    <property type="match status" value="1"/>
</dbReference>
<dbReference type="PANTHER" id="PTHR11407:SF28">
    <property type="entry name" value="LYSOZYME C"/>
    <property type="match status" value="1"/>
</dbReference>
<dbReference type="Pfam" id="PF00062">
    <property type="entry name" value="Lys"/>
    <property type="match status" value="1"/>
</dbReference>
<dbReference type="PRINTS" id="PR00137">
    <property type="entry name" value="LYSOZYME"/>
</dbReference>
<dbReference type="PRINTS" id="PR00135">
    <property type="entry name" value="LYZLACT"/>
</dbReference>
<dbReference type="SMART" id="SM00263">
    <property type="entry name" value="LYZ1"/>
    <property type="match status" value="1"/>
</dbReference>
<dbReference type="SUPFAM" id="SSF53955">
    <property type="entry name" value="Lysozyme-like"/>
    <property type="match status" value="1"/>
</dbReference>
<dbReference type="PROSITE" id="PS00128">
    <property type="entry name" value="GLYCOSYL_HYDROL_F22_1"/>
    <property type="match status" value="1"/>
</dbReference>
<dbReference type="PROSITE" id="PS51348">
    <property type="entry name" value="GLYCOSYL_HYDROL_F22_2"/>
    <property type="match status" value="1"/>
</dbReference>
<gene>
    <name type="primary">LYZ</name>
    <name type="synonym">LZM</name>
</gene>
<sequence length="148" mass="16537">MKALIVLGLVLLSVTVQGKVFERCELARTLKRLGMDGYRGISLANWMCLAKWESGYNTRATNYNAGDRSTDYGIFQINSRYWCNDGKTPGAVNACHLSCSALLQDNIADAVACAKRVVRDPQGIRAWVAWRNRCQNRDVRQYVQGCGV</sequence>
<name>LYSC_PANPA</name>
<accession>P61627</accession>
<accession>P00695</accession>
<accession>Q13170</accession>
<accession>Q9UCF8</accession>
<keyword id="KW-0929">Antimicrobial</keyword>
<keyword id="KW-0081">Bacteriolytic enzyme</keyword>
<keyword id="KW-1015">Disulfide bond</keyword>
<keyword id="KW-0326">Glycosidase</keyword>
<keyword id="KW-0378">Hydrolase</keyword>
<keyword id="KW-1185">Reference proteome</keyword>
<keyword id="KW-0964">Secreted</keyword>
<keyword id="KW-0732">Signal</keyword>
<comment type="function">
    <text>Lysozymes have primarily a bacteriolytic function; those in tissues and body fluids are associated with the monocyte-macrophage system and enhance the activity of immunoagents.</text>
</comment>
<comment type="catalytic activity">
    <reaction>
        <text>Hydrolysis of (1-&gt;4)-beta-linkages between N-acetylmuramic acid and N-acetyl-D-glucosamine residues in a peptidoglycan and between N-acetyl-D-glucosamine residues in chitodextrins.</text>
        <dbReference type="EC" id="3.2.1.17"/>
    </reaction>
</comment>
<comment type="subunit">
    <text evidence="1">Monomer.</text>
</comment>
<comment type="subcellular location">
    <subcellularLocation>
        <location evidence="1">Secreted</location>
    </subcellularLocation>
</comment>
<comment type="miscellaneous">
    <text>Lysozyme C is capable of both hydrolysis and transglycosylation; it also shows a slight esterase activity. It acts rapidly on both peptide-substituted and unsubstituted peptidoglycan, and slowly on chitin oligosaccharides.</text>
</comment>
<comment type="similarity">
    <text evidence="2">Belongs to the glycosyl hydrolase 22 family.</text>
</comment>
<feature type="signal peptide" evidence="1">
    <location>
        <begin position="1"/>
        <end position="18"/>
    </location>
</feature>
<feature type="chain" id="PRO_0000018475" description="Lysozyme C">
    <location>
        <begin position="19"/>
        <end position="148"/>
    </location>
</feature>
<feature type="domain" description="C-type lysozyme" evidence="2">
    <location>
        <begin position="19"/>
        <end position="148"/>
    </location>
</feature>
<feature type="active site" evidence="2">
    <location>
        <position position="53"/>
    </location>
</feature>
<feature type="active site" evidence="2">
    <location>
        <position position="71"/>
    </location>
</feature>
<feature type="disulfide bond" evidence="2">
    <location>
        <begin position="24"/>
        <end position="146"/>
    </location>
</feature>
<feature type="disulfide bond" evidence="2">
    <location>
        <begin position="48"/>
        <end position="134"/>
    </location>
</feature>
<feature type="disulfide bond" evidence="2">
    <location>
        <begin position="83"/>
        <end position="99"/>
    </location>
</feature>
<feature type="disulfide bond" evidence="2">
    <location>
        <begin position="95"/>
        <end position="113"/>
    </location>
</feature>
<organism>
    <name type="scientific">Pan paniscus</name>
    <name type="common">Pygmy chimpanzee</name>
    <name type="synonym">Bonobo</name>
    <dbReference type="NCBI Taxonomy" id="9597"/>
    <lineage>
        <taxon>Eukaryota</taxon>
        <taxon>Metazoa</taxon>
        <taxon>Chordata</taxon>
        <taxon>Craniata</taxon>
        <taxon>Vertebrata</taxon>
        <taxon>Euteleostomi</taxon>
        <taxon>Mammalia</taxon>
        <taxon>Eutheria</taxon>
        <taxon>Euarchontoglires</taxon>
        <taxon>Primates</taxon>
        <taxon>Haplorrhini</taxon>
        <taxon>Catarrhini</taxon>
        <taxon>Hominidae</taxon>
        <taxon>Pan</taxon>
    </lineage>
</organism>
<proteinExistence type="inferred from homology"/>
<evidence type="ECO:0000250" key="1"/>
<evidence type="ECO:0000255" key="2">
    <source>
        <dbReference type="PROSITE-ProRule" id="PRU00680"/>
    </source>
</evidence>